<keyword id="KW-0687">Ribonucleoprotein</keyword>
<keyword id="KW-0689">Ribosomal protein</keyword>
<keyword id="KW-0694">RNA-binding</keyword>
<keyword id="KW-0699">rRNA-binding</keyword>
<accession>Q04PU1</accession>
<dbReference type="EMBL" id="CP000350">
    <property type="protein sequence ID" value="ABJ77079.1"/>
    <property type="molecule type" value="Genomic_DNA"/>
</dbReference>
<dbReference type="RefSeq" id="WP_011669434.1">
    <property type="nucleotide sequence ID" value="NC_008510.1"/>
</dbReference>
<dbReference type="SMR" id="Q04PU1"/>
<dbReference type="KEGG" id="lbj:LBJ_2656"/>
<dbReference type="HOGENOM" id="CLU_036235_2_1_12"/>
<dbReference type="Proteomes" id="UP000000656">
    <property type="component" value="Chromosome 1"/>
</dbReference>
<dbReference type="GO" id="GO:0015934">
    <property type="term" value="C:large ribosomal subunit"/>
    <property type="evidence" value="ECO:0007669"/>
    <property type="project" value="InterPro"/>
</dbReference>
<dbReference type="GO" id="GO:0019843">
    <property type="term" value="F:rRNA binding"/>
    <property type="evidence" value="ECO:0007669"/>
    <property type="project" value="UniProtKB-UniRule"/>
</dbReference>
<dbReference type="GO" id="GO:0003735">
    <property type="term" value="F:structural constituent of ribosome"/>
    <property type="evidence" value="ECO:0007669"/>
    <property type="project" value="InterPro"/>
</dbReference>
<dbReference type="GO" id="GO:0016740">
    <property type="term" value="F:transferase activity"/>
    <property type="evidence" value="ECO:0007669"/>
    <property type="project" value="InterPro"/>
</dbReference>
<dbReference type="GO" id="GO:0002181">
    <property type="term" value="P:cytoplasmic translation"/>
    <property type="evidence" value="ECO:0007669"/>
    <property type="project" value="TreeGrafter"/>
</dbReference>
<dbReference type="FunFam" id="2.30.30.30:FF:000001">
    <property type="entry name" value="50S ribosomal protein L2"/>
    <property type="match status" value="1"/>
</dbReference>
<dbReference type="FunFam" id="2.40.50.140:FF:000003">
    <property type="entry name" value="50S ribosomal protein L2"/>
    <property type="match status" value="1"/>
</dbReference>
<dbReference type="FunFam" id="4.10.950.10:FF:000001">
    <property type="entry name" value="50S ribosomal protein L2"/>
    <property type="match status" value="1"/>
</dbReference>
<dbReference type="Gene3D" id="2.30.30.30">
    <property type="match status" value="1"/>
</dbReference>
<dbReference type="Gene3D" id="2.40.50.140">
    <property type="entry name" value="Nucleic acid-binding proteins"/>
    <property type="match status" value="1"/>
</dbReference>
<dbReference type="Gene3D" id="4.10.950.10">
    <property type="entry name" value="Ribosomal protein L2, domain 3"/>
    <property type="match status" value="1"/>
</dbReference>
<dbReference type="HAMAP" id="MF_01320_B">
    <property type="entry name" value="Ribosomal_uL2_B"/>
    <property type="match status" value="1"/>
</dbReference>
<dbReference type="InterPro" id="IPR012340">
    <property type="entry name" value="NA-bd_OB-fold"/>
</dbReference>
<dbReference type="InterPro" id="IPR014722">
    <property type="entry name" value="Rib_uL2_dom2"/>
</dbReference>
<dbReference type="InterPro" id="IPR002171">
    <property type="entry name" value="Ribosomal_uL2"/>
</dbReference>
<dbReference type="InterPro" id="IPR005880">
    <property type="entry name" value="Ribosomal_uL2_bac/org-type"/>
</dbReference>
<dbReference type="InterPro" id="IPR022669">
    <property type="entry name" value="Ribosomal_uL2_C"/>
</dbReference>
<dbReference type="InterPro" id="IPR022671">
    <property type="entry name" value="Ribosomal_uL2_CS"/>
</dbReference>
<dbReference type="InterPro" id="IPR014726">
    <property type="entry name" value="Ribosomal_uL2_dom3"/>
</dbReference>
<dbReference type="InterPro" id="IPR022666">
    <property type="entry name" value="Ribosomal_uL2_RNA-bd_dom"/>
</dbReference>
<dbReference type="InterPro" id="IPR008991">
    <property type="entry name" value="Translation_prot_SH3-like_sf"/>
</dbReference>
<dbReference type="NCBIfam" id="TIGR01171">
    <property type="entry name" value="rplB_bact"/>
    <property type="match status" value="1"/>
</dbReference>
<dbReference type="PANTHER" id="PTHR13691:SF5">
    <property type="entry name" value="LARGE RIBOSOMAL SUBUNIT PROTEIN UL2M"/>
    <property type="match status" value="1"/>
</dbReference>
<dbReference type="PANTHER" id="PTHR13691">
    <property type="entry name" value="RIBOSOMAL PROTEIN L2"/>
    <property type="match status" value="1"/>
</dbReference>
<dbReference type="Pfam" id="PF00181">
    <property type="entry name" value="Ribosomal_L2"/>
    <property type="match status" value="1"/>
</dbReference>
<dbReference type="Pfam" id="PF03947">
    <property type="entry name" value="Ribosomal_L2_C"/>
    <property type="match status" value="1"/>
</dbReference>
<dbReference type="PIRSF" id="PIRSF002158">
    <property type="entry name" value="Ribosomal_L2"/>
    <property type="match status" value="1"/>
</dbReference>
<dbReference type="SMART" id="SM01383">
    <property type="entry name" value="Ribosomal_L2"/>
    <property type="match status" value="1"/>
</dbReference>
<dbReference type="SMART" id="SM01382">
    <property type="entry name" value="Ribosomal_L2_C"/>
    <property type="match status" value="1"/>
</dbReference>
<dbReference type="SUPFAM" id="SSF50249">
    <property type="entry name" value="Nucleic acid-binding proteins"/>
    <property type="match status" value="1"/>
</dbReference>
<dbReference type="SUPFAM" id="SSF50104">
    <property type="entry name" value="Translation proteins SH3-like domain"/>
    <property type="match status" value="1"/>
</dbReference>
<dbReference type="PROSITE" id="PS00467">
    <property type="entry name" value="RIBOSOMAL_L2"/>
    <property type="match status" value="1"/>
</dbReference>
<reference key="1">
    <citation type="journal article" date="2006" name="Proc. Natl. Acad. Sci. U.S.A.">
        <title>Genome reduction in Leptospira borgpetersenii reflects limited transmission potential.</title>
        <authorList>
            <person name="Bulach D.M."/>
            <person name="Zuerner R.L."/>
            <person name="Wilson P."/>
            <person name="Seemann T."/>
            <person name="McGrath A."/>
            <person name="Cullen P.A."/>
            <person name="Davis J."/>
            <person name="Johnson M."/>
            <person name="Kuczek E."/>
            <person name="Alt D.P."/>
            <person name="Peterson-Burch B."/>
            <person name="Coppel R.L."/>
            <person name="Rood J.I."/>
            <person name="Davies J.K."/>
            <person name="Adler B."/>
        </authorList>
    </citation>
    <scope>NUCLEOTIDE SEQUENCE [LARGE SCALE GENOMIC DNA]</scope>
    <source>
        <strain>JB197</strain>
    </source>
</reference>
<feature type="chain" id="PRO_0000309946" description="Large ribosomal subunit protein uL2">
    <location>
        <begin position="1"/>
        <end position="279"/>
    </location>
</feature>
<feature type="region of interest" description="Disordered" evidence="2">
    <location>
        <begin position="223"/>
        <end position="279"/>
    </location>
</feature>
<feature type="compositionally biased region" description="Basic residues" evidence="2">
    <location>
        <begin position="270"/>
        <end position="279"/>
    </location>
</feature>
<protein>
    <recommendedName>
        <fullName evidence="1">Large ribosomal subunit protein uL2</fullName>
    </recommendedName>
    <alternativeName>
        <fullName evidence="3">50S ribosomal protein L2</fullName>
    </alternativeName>
</protein>
<evidence type="ECO:0000255" key="1">
    <source>
        <dbReference type="HAMAP-Rule" id="MF_01320"/>
    </source>
</evidence>
<evidence type="ECO:0000256" key="2">
    <source>
        <dbReference type="SAM" id="MobiDB-lite"/>
    </source>
</evidence>
<evidence type="ECO:0000305" key="3"/>
<organism>
    <name type="scientific">Leptospira borgpetersenii serovar Hardjo-bovis (strain JB197)</name>
    <dbReference type="NCBI Taxonomy" id="355277"/>
    <lineage>
        <taxon>Bacteria</taxon>
        <taxon>Pseudomonadati</taxon>
        <taxon>Spirochaetota</taxon>
        <taxon>Spirochaetia</taxon>
        <taxon>Leptospirales</taxon>
        <taxon>Leptospiraceae</taxon>
        <taxon>Leptospira</taxon>
    </lineage>
</organism>
<sequence>MGIKKFKPVTSASRYKSVLDFKEITETEPYKPLTLTLSYKAGRGDGGKISVRHKGGRVKRKYRIIDFKRRKTNVSAVVKTLEYDPNRSAFISLICYKDGEYAYILAPDGIKVGDTVQSGAGSEIKIGNAMPIGKIPPGTNVHNVELQIGRGGQIARTAGSFGTIAGRDGEYILLKLPSTEVRKVHENCYATIGICSNKDHNLVSIGKAGRSRWLGKRPTVRGVVMNPVDHPHGGGEGRTSGGRHPVSPWGQPTKGYKTRRSARPSDKFIVQKRKRNRNR</sequence>
<proteinExistence type="inferred from homology"/>
<comment type="function">
    <text evidence="1">One of the primary rRNA binding proteins. Required for association of the 30S and 50S subunits to form the 70S ribosome, for tRNA binding and peptide bond formation. It has been suggested to have peptidyltransferase activity; this is somewhat controversial. Makes several contacts with the 16S rRNA in the 70S ribosome.</text>
</comment>
<comment type="subunit">
    <text evidence="1">Part of the 50S ribosomal subunit. Forms a bridge to the 30S subunit in the 70S ribosome.</text>
</comment>
<comment type="similarity">
    <text evidence="1">Belongs to the universal ribosomal protein uL2 family.</text>
</comment>
<gene>
    <name evidence="1" type="primary">rplB</name>
    <name type="ordered locus">LBJ_2656</name>
</gene>
<name>RL2_LEPBJ</name>